<proteinExistence type="inferred from homology"/>
<sequence>MPQLDTSTWFINIVSMILTLFIVFQLKISKHSYPTHPEVKTTKMTKHSAPWESKWTKIYSPLSLPQQ</sequence>
<protein>
    <recommendedName>
        <fullName evidence="1">ATP synthase F(0) complex subunit 8</fullName>
    </recommendedName>
    <alternativeName>
        <fullName>A6L</fullName>
    </alternativeName>
    <alternativeName>
        <fullName>F-ATPase subunit 8</fullName>
    </alternativeName>
</protein>
<keyword id="KW-0007">Acetylation</keyword>
<keyword id="KW-0066">ATP synthesis</keyword>
<keyword id="KW-0138">CF(0)</keyword>
<keyword id="KW-0375">Hydrogen ion transport</keyword>
<keyword id="KW-0406">Ion transport</keyword>
<keyword id="KW-0472">Membrane</keyword>
<keyword id="KW-0496">Mitochondrion</keyword>
<keyword id="KW-1185">Reference proteome</keyword>
<keyword id="KW-0812">Transmembrane</keyword>
<keyword id="KW-1133">Transmembrane helix</keyword>
<keyword id="KW-0813">Transport</keyword>
<organism>
    <name type="scientific">Equus caballus</name>
    <name type="common">Horse</name>
    <dbReference type="NCBI Taxonomy" id="9796"/>
    <lineage>
        <taxon>Eukaryota</taxon>
        <taxon>Metazoa</taxon>
        <taxon>Chordata</taxon>
        <taxon>Craniata</taxon>
        <taxon>Vertebrata</taxon>
        <taxon>Euteleostomi</taxon>
        <taxon>Mammalia</taxon>
        <taxon>Eutheria</taxon>
        <taxon>Laurasiatheria</taxon>
        <taxon>Perissodactyla</taxon>
        <taxon>Equidae</taxon>
        <taxon>Equus</taxon>
    </lineage>
</organism>
<feature type="chain" id="PRO_0000195535" description="ATP synthase F(0) complex subunit 8">
    <location>
        <begin position="1"/>
        <end position="67"/>
    </location>
</feature>
<feature type="transmembrane region" description="Helical" evidence="4">
    <location>
        <begin position="8"/>
        <end position="24"/>
    </location>
</feature>
<feature type="modified residue" description="N6-acetyllysine; alternate" evidence="2">
    <location>
        <position position="54"/>
    </location>
</feature>
<feature type="modified residue" description="N6-succinyllysine; alternate" evidence="2">
    <location>
        <position position="54"/>
    </location>
</feature>
<feature type="modified residue" description="N6-acetyllysine" evidence="2">
    <location>
        <position position="57"/>
    </location>
</feature>
<reference key="1">
    <citation type="journal article" date="1994" name="Gene">
        <title>The complete mitochondrial DNA sequence of the horse, Equus caballus: extensive heteroplasmy of the control region.</title>
        <authorList>
            <person name="Xu X."/>
            <person name="Arnason U."/>
        </authorList>
    </citation>
    <scope>NUCLEOTIDE SEQUENCE [LARGE SCALE GENOMIC DNA]</scope>
    <source>
        <strain evidence="6">Thoroughbred</strain>
    </source>
</reference>
<evidence type="ECO:0000250" key="1">
    <source>
        <dbReference type="UniProtKB" id="P03928"/>
    </source>
</evidence>
<evidence type="ECO:0000250" key="2">
    <source>
        <dbReference type="UniProtKB" id="P03930"/>
    </source>
</evidence>
<evidence type="ECO:0000250" key="3">
    <source>
        <dbReference type="UniProtKB" id="P19483"/>
    </source>
</evidence>
<evidence type="ECO:0000255" key="4"/>
<evidence type="ECO:0000305" key="5"/>
<evidence type="ECO:0000312" key="6">
    <source>
        <dbReference type="Proteomes" id="UP000002281"/>
    </source>
</evidence>
<accession>P48663</accession>
<geneLocation type="mitochondrion"/>
<name>ATP8_HORSE</name>
<dbReference type="EMBL" id="X79547">
    <property type="protein sequence ID" value="CAA56083.1"/>
    <property type="molecule type" value="Genomic_DNA"/>
</dbReference>
<dbReference type="PIR" id="T11861">
    <property type="entry name" value="T11861"/>
</dbReference>
<dbReference type="RefSeq" id="NP_007164.1">
    <property type="nucleotide sequence ID" value="NC_001640.1"/>
</dbReference>
<dbReference type="SMR" id="P48663"/>
<dbReference type="FunCoup" id="P48663">
    <property type="interactions" value="84"/>
</dbReference>
<dbReference type="STRING" id="9796.ENSECAP00000023104"/>
<dbReference type="PaxDb" id="9796-ENSECAP00000023104"/>
<dbReference type="Ensembl" id="ENSECAT00000029832.1">
    <property type="protein sequence ID" value="ENSECAP00000023104.1"/>
    <property type="gene ID" value="ENSECAG00000027679.1"/>
</dbReference>
<dbReference type="KEGG" id="ecb:807849"/>
<dbReference type="VGNC" id="VGNC:59014">
    <property type="gene designation" value="MT-ATP8"/>
</dbReference>
<dbReference type="GeneTree" id="ENSGT00390000008771"/>
<dbReference type="HOGENOM" id="CLU_2811757_0_0_1"/>
<dbReference type="InParanoid" id="P48663"/>
<dbReference type="OMA" id="LDTSTWF"/>
<dbReference type="OrthoDB" id="9835073at2759"/>
<dbReference type="Proteomes" id="UP000002281">
    <property type="component" value="Mitochondrion"/>
</dbReference>
<dbReference type="Bgee" id="ENSECAG00000027679">
    <property type="expression patterns" value="Expressed in adult mammalian kidney and 23 other cell types or tissues"/>
</dbReference>
<dbReference type="ExpressionAtlas" id="P48663">
    <property type="expression patterns" value="baseline"/>
</dbReference>
<dbReference type="GO" id="GO:0031966">
    <property type="term" value="C:mitochondrial membrane"/>
    <property type="evidence" value="ECO:0007669"/>
    <property type="project" value="UniProtKB-SubCell"/>
</dbReference>
<dbReference type="GO" id="GO:0045259">
    <property type="term" value="C:proton-transporting ATP synthase complex"/>
    <property type="evidence" value="ECO:0000250"/>
    <property type="project" value="UniProtKB"/>
</dbReference>
<dbReference type="GO" id="GO:0015078">
    <property type="term" value="F:proton transmembrane transporter activity"/>
    <property type="evidence" value="ECO:0007669"/>
    <property type="project" value="InterPro"/>
</dbReference>
<dbReference type="GO" id="GO:0015986">
    <property type="term" value="P:proton motive force-driven ATP synthesis"/>
    <property type="evidence" value="ECO:0007669"/>
    <property type="project" value="InterPro"/>
</dbReference>
<dbReference type="InterPro" id="IPR039017">
    <property type="entry name" value="ATP8_mammal"/>
</dbReference>
<dbReference type="InterPro" id="IPR001421">
    <property type="entry name" value="ATP8_metazoa"/>
</dbReference>
<dbReference type="PANTHER" id="PTHR13722">
    <property type="entry name" value="ATP SYNTHASE PROTEIN 8"/>
    <property type="match status" value="1"/>
</dbReference>
<dbReference type="PANTHER" id="PTHR13722:SF0">
    <property type="entry name" value="ATP SYNTHASE PROTEIN 8"/>
    <property type="match status" value="1"/>
</dbReference>
<dbReference type="Pfam" id="PF00895">
    <property type="entry name" value="ATP-synt_8"/>
    <property type="match status" value="1"/>
</dbReference>
<comment type="function">
    <text evidence="1 3">Subunit 8, of the mitochondrial membrane ATP synthase complex (F(1)F(0) ATP synthase or Complex V) that produces ATP from ADP in the presence of a proton gradient across the membrane which is generated by electron transport complexes of the respiratory chain. ATP synthase complex consist of a soluble F(1) head domain - the catalytic core - and a membrane F(1) domain - the membrane proton channel. These two domains are linked by a central stalk rotating inside the F(1) region and a stationary peripheral stalk. During catalysis, ATP synthesis in the catalytic domain of F(1) is coupled via a rotary mechanism of the central stalk subunits to proton translocation (By similarity). In vivo, can only synthesize ATP although its ATP hydrolase activity can be activated artificially in vitro (By similarity). Part of the complex F(0) domain (By similarity).</text>
</comment>
<comment type="subunit">
    <text evidence="1">Component of the ATP synthase complex composed at least of ATP5F1A/subunit alpha, ATP5F1B/subunit beta, ATP5MC1/subunit c (homooctomer), MT-ATP6/subunit a, MT-ATP8/subunit 8, ATP5ME/subunit e, ATP5MF/subunit f, ATP5MG/subunit g, ATP5MK/subunit k, ATP5MJ/subunit j, ATP5F1C/subunit gamma, ATP5F1D/subunit delta, ATP5F1E/subunit epsilon, ATP5PF/subunit F6, ATP5PB/subunit b, ATP5PD/subunit d, ATP5PO/subunit OSCP. ATP synthase complex consists of a soluble F(1) head domain (subunits alpha(3) and beta(3)) - the catalytic core - and a membrane F(0) domain - the membrane proton channel (subunits c, a, 8, e, f, g, k and j). These two domains are linked by a central stalk (subunits gamma, delta, and epsilon) rotating inside the F1 region and a stationary peripheral stalk (subunits F6, b, d, and OSCP). Interacts with PRICKLE3.</text>
</comment>
<comment type="subcellular location">
    <subcellularLocation>
        <location>Mitochondrion membrane</location>
        <topology>Single-pass membrane protein</topology>
    </subcellularLocation>
</comment>
<comment type="similarity">
    <text evidence="5">Belongs to the ATPase protein 8 family.</text>
</comment>
<gene>
    <name evidence="1" type="primary">MT-ATP8</name>
    <name type="synonym">ATP8</name>
    <name type="synonym">ATPASE8</name>
    <name type="synonym">MTATP8</name>
</gene>